<comment type="function">
    <text evidence="1">Oxidative deamination of D-amino acids.</text>
</comment>
<comment type="catalytic activity">
    <reaction evidence="1">
        <text>a D-alpha-amino acid + A + H2O = a 2-oxocarboxylate + AH2 + NH4(+)</text>
        <dbReference type="Rhea" id="RHEA:18125"/>
        <dbReference type="ChEBI" id="CHEBI:13193"/>
        <dbReference type="ChEBI" id="CHEBI:15377"/>
        <dbReference type="ChEBI" id="CHEBI:17499"/>
        <dbReference type="ChEBI" id="CHEBI:28938"/>
        <dbReference type="ChEBI" id="CHEBI:35179"/>
        <dbReference type="ChEBI" id="CHEBI:59871"/>
    </reaction>
</comment>
<comment type="cofactor">
    <cofactor evidence="1">
        <name>FAD</name>
        <dbReference type="ChEBI" id="CHEBI:57692"/>
    </cofactor>
</comment>
<comment type="pathway">
    <text>Amino-acid degradation; D-alanine degradation; NH(3) and pyruvate from D-alanine: step 1/1.</text>
</comment>
<comment type="similarity">
    <text evidence="1">Belongs to the DadA oxidoreductase family.</text>
</comment>
<proteinExistence type="inferred from homology"/>
<gene>
    <name evidence="1" type="primary">dadA</name>
    <name type="ordered locus">RHOS4_31600</name>
    <name type="ORF">RSP_3113</name>
</gene>
<evidence type="ECO:0000255" key="1">
    <source>
        <dbReference type="HAMAP-Rule" id="MF_01202"/>
    </source>
</evidence>
<organism>
    <name type="scientific">Cereibacter sphaeroides (strain ATCC 17023 / DSM 158 / JCM 6121 / CCUG 31486 / LMG 2827 / NBRC 12203 / NCIMB 8253 / ATH 2.4.1.)</name>
    <name type="common">Rhodobacter sphaeroides</name>
    <dbReference type="NCBI Taxonomy" id="272943"/>
    <lineage>
        <taxon>Bacteria</taxon>
        <taxon>Pseudomonadati</taxon>
        <taxon>Pseudomonadota</taxon>
        <taxon>Alphaproteobacteria</taxon>
        <taxon>Rhodobacterales</taxon>
        <taxon>Paracoccaceae</taxon>
        <taxon>Cereibacter</taxon>
    </lineage>
</organism>
<protein>
    <recommendedName>
        <fullName evidence="1">D-amino acid dehydrogenase</fullName>
        <ecNumber evidence="1">1.4.99.-</ecNumber>
    </recommendedName>
</protein>
<keyword id="KW-0274">FAD</keyword>
<keyword id="KW-0285">Flavoprotein</keyword>
<keyword id="KW-0560">Oxidoreductase</keyword>
<keyword id="KW-1185">Reference proteome</keyword>
<dbReference type="EC" id="1.4.99.-" evidence="1"/>
<dbReference type="EMBL" id="CP000144">
    <property type="protein sequence ID" value="ABA80728.1"/>
    <property type="molecule type" value="Genomic_DNA"/>
</dbReference>
<dbReference type="RefSeq" id="WP_011339050.1">
    <property type="nucleotide sequence ID" value="NZ_CP030272.1"/>
</dbReference>
<dbReference type="RefSeq" id="YP_354629.1">
    <property type="nucleotide sequence ID" value="NC_007494.2"/>
</dbReference>
<dbReference type="SMR" id="Q3IXK6"/>
<dbReference type="STRING" id="272943.RSP_3113"/>
<dbReference type="EnsemblBacteria" id="ABA80728">
    <property type="protein sequence ID" value="ABA80728"/>
    <property type="gene ID" value="RSP_3113"/>
</dbReference>
<dbReference type="KEGG" id="rsp:RSP_3113"/>
<dbReference type="PATRIC" id="fig|272943.9.peg.3539"/>
<dbReference type="eggNOG" id="COG0665">
    <property type="taxonomic scope" value="Bacteria"/>
</dbReference>
<dbReference type="OrthoDB" id="9805337at2"/>
<dbReference type="PhylomeDB" id="Q3IXK6"/>
<dbReference type="UniPathway" id="UPA00043">
    <property type="reaction ID" value="UER00498"/>
</dbReference>
<dbReference type="Proteomes" id="UP000002703">
    <property type="component" value="Chromosome 2"/>
</dbReference>
<dbReference type="GO" id="GO:0005737">
    <property type="term" value="C:cytoplasm"/>
    <property type="evidence" value="ECO:0007669"/>
    <property type="project" value="TreeGrafter"/>
</dbReference>
<dbReference type="GO" id="GO:0005886">
    <property type="term" value="C:plasma membrane"/>
    <property type="evidence" value="ECO:0007669"/>
    <property type="project" value="TreeGrafter"/>
</dbReference>
<dbReference type="GO" id="GO:0008718">
    <property type="term" value="F:D-amino-acid dehydrogenase activity"/>
    <property type="evidence" value="ECO:0007669"/>
    <property type="project" value="UniProtKB-UniRule"/>
</dbReference>
<dbReference type="GO" id="GO:0055130">
    <property type="term" value="P:D-alanine catabolic process"/>
    <property type="evidence" value="ECO:0007669"/>
    <property type="project" value="UniProtKB-UniPathway"/>
</dbReference>
<dbReference type="FunFam" id="3.50.50.60:FF:000020">
    <property type="entry name" value="D-amino acid dehydrogenase"/>
    <property type="match status" value="1"/>
</dbReference>
<dbReference type="Gene3D" id="3.30.9.10">
    <property type="entry name" value="D-Amino Acid Oxidase, subunit A, domain 2"/>
    <property type="match status" value="1"/>
</dbReference>
<dbReference type="Gene3D" id="3.50.50.60">
    <property type="entry name" value="FAD/NAD(P)-binding domain"/>
    <property type="match status" value="2"/>
</dbReference>
<dbReference type="HAMAP" id="MF_01202">
    <property type="entry name" value="DadA"/>
    <property type="match status" value="1"/>
</dbReference>
<dbReference type="InterPro" id="IPR023080">
    <property type="entry name" value="DadA"/>
</dbReference>
<dbReference type="InterPro" id="IPR006076">
    <property type="entry name" value="FAD-dep_OxRdtase"/>
</dbReference>
<dbReference type="InterPro" id="IPR036188">
    <property type="entry name" value="FAD/NAD-bd_sf"/>
</dbReference>
<dbReference type="NCBIfam" id="NF001933">
    <property type="entry name" value="PRK00711.1"/>
    <property type="match status" value="1"/>
</dbReference>
<dbReference type="PANTHER" id="PTHR13847:SF280">
    <property type="entry name" value="D-AMINO ACID DEHYDROGENASE"/>
    <property type="match status" value="1"/>
</dbReference>
<dbReference type="PANTHER" id="PTHR13847">
    <property type="entry name" value="SARCOSINE DEHYDROGENASE-RELATED"/>
    <property type="match status" value="1"/>
</dbReference>
<dbReference type="Pfam" id="PF01266">
    <property type="entry name" value="DAO"/>
    <property type="match status" value="1"/>
</dbReference>
<dbReference type="SUPFAM" id="SSF54373">
    <property type="entry name" value="FAD-linked reductases, C-terminal domain"/>
    <property type="match status" value="1"/>
</dbReference>
<dbReference type="SUPFAM" id="SSF51905">
    <property type="entry name" value="FAD/NAD(P)-binding domain"/>
    <property type="match status" value="1"/>
</dbReference>
<reference key="1">
    <citation type="submission" date="2005-09" db="EMBL/GenBank/DDBJ databases">
        <title>Complete sequence of chromosome 2 of Rhodobacter sphaeroides 2.4.1.</title>
        <authorList>
            <person name="Copeland A."/>
            <person name="Lucas S."/>
            <person name="Lapidus A."/>
            <person name="Barry K."/>
            <person name="Detter J.C."/>
            <person name="Glavina T."/>
            <person name="Hammon N."/>
            <person name="Israni S."/>
            <person name="Pitluck S."/>
            <person name="Richardson P."/>
            <person name="Mackenzie C."/>
            <person name="Choudhary M."/>
            <person name="Larimer F."/>
            <person name="Hauser L.J."/>
            <person name="Land M."/>
            <person name="Donohue T.J."/>
            <person name="Kaplan S."/>
        </authorList>
    </citation>
    <scope>NUCLEOTIDE SEQUENCE [LARGE SCALE GENOMIC DNA]</scope>
    <source>
        <strain>ATCC 17023 / DSM 158 / JCM 6121 / CCUG 31486 / LMG 2827 / NBRC 12203 / NCIMB 8253 / ATH 2.4.1.</strain>
    </source>
</reference>
<sequence length="436" mass="46151">MRIVVLGAGVVGVTSAYELARAGHEVTVVDRQPAAALETSFANAGEISPGYASPWAAPGIPAKALRWMFMKHAPLVIRPRLDAAQVRFLLAILRNCTPAAYAQNKGRMVRLAEYSRDCLTDLRATTGLAFDERQQGTLQLFRSQKQLDAAARDIEVLRAGGVPFELLDADGCLAAEPGLRAARDRIAGGLRLTGDETGDCFKFTQGLAGLAEEGGVRFRYGTGVERLRVEGGRVTGVETTKGTFLADAVVVALGSHSPALVAPLGLRLPVYPVKGYSITVPIVDADRAPVSTVMDETYKIAITRLGTRIRVGGMAEVAGFSATLPPARRETLAMSVNDLFGGAGDLSRASFWTGLRPMTPDGTPVVGRTPVAGLWLNTGHGTLGWTMAAGSARVLSDLIDGRAPEIESADLGIERYAAPGRRARPAVRLNPARQAG</sequence>
<name>DADA_CERS4</name>
<accession>Q3IXK6</accession>
<feature type="chain" id="PRO_1000066112" description="D-amino acid dehydrogenase">
    <location>
        <begin position="1"/>
        <end position="436"/>
    </location>
</feature>
<feature type="binding site" evidence="1">
    <location>
        <begin position="3"/>
        <end position="17"/>
    </location>
    <ligand>
        <name>FAD</name>
        <dbReference type="ChEBI" id="CHEBI:57692"/>
    </ligand>
</feature>